<proteinExistence type="inferred from homology"/>
<name>NUOH_PROMH</name>
<feature type="chain" id="PRO_1000143611" description="NADH-quinone oxidoreductase subunit H">
    <location>
        <begin position="1"/>
        <end position="325"/>
    </location>
</feature>
<feature type="transmembrane region" description="Helical" evidence="1">
    <location>
        <begin position="11"/>
        <end position="31"/>
    </location>
</feature>
<feature type="transmembrane region" description="Helical" evidence="1">
    <location>
        <begin position="81"/>
        <end position="101"/>
    </location>
</feature>
<feature type="transmembrane region" description="Helical" evidence="1">
    <location>
        <begin position="114"/>
        <end position="134"/>
    </location>
</feature>
<feature type="transmembrane region" description="Helical" evidence="1">
    <location>
        <begin position="154"/>
        <end position="174"/>
    </location>
</feature>
<feature type="transmembrane region" description="Helical" evidence="1">
    <location>
        <begin position="186"/>
        <end position="206"/>
    </location>
</feature>
<feature type="transmembrane region" description="Helical" evidence="1">
    <location>
        <begin position="237"/>
        <end position="257"/>
    </location>
</feature>
<feature type="transmembrane region" description="Helical" evidence="1">
    <location>
        <begin position="265"/>
        <end position="285"/>
    </location>
</feature>
<feature type="transmembrane region" description="Helical" evidence="1">
    <location>
        <begin position="304"/>
        <end position="324"/>
    </location>
</feature>
<evidence type="ECO:0000255" key="1">
    <source>
        <dbReference type="HAMAP-Rule" id="MF_01350"/>
    </source>
</evidence>
<keyword id="KW-0997">Cell inner membrane</keyword>
<keyword id="KW-1003">Cell membrane</keyword>
<keyword id="KW-0472">Membrane</keyword>
<keyword id="KW-0520">NAD</keyword>
<keyword id="KW-0874">Quinone</keyword>
<keyword id="KW-1185">Reference proteome</keyword>
<keyword id="KW-1278">Translocase</keyword>
<keyword id="KW-0812">Transmembrane</keyword>
<keyword id="KW-1133">Transmembrane helix</keyword>
<keyword id="KW-0830">Ubiquinone</keyword>
<accession>B4EZC4</accession>
<organism>
    <name type="scientific">Proteus mirabilis (strain HI4320)</name>
    <dbReference type="NCBI Taxonomy" id="529507"/>
    <lineage>
        <taxon>Bacteria</taxon>
        <taxon>Pseudomonadati</taxon>
        <taxon>Pseudomonadota</taxon>
        <taxon>Gammaproteobacteria</taxon>
        <taxon>Enterobacterales</taxon>
        <taxon>Morganellaceae</taxon>
        <taxon>Proteus</taxon>
    </lineage>
</organism>
<dbReference type="EC" id="7.1.1.-" evidence="1"/>
<dbReference type="EMBL" id="AM942759">
    <property type="protein sequence ID" value="CAR43658.1"/>
    <property type="molecule type" value="Genomic_DNA"/>
</dbReference>
<dbReference type="RefSeq" id="WP_004243690.1">
    <property type="nucleotide sequence ID" value="NC_010554.1"/>
</dbReference>
<dbReference type="SMR" id="B4EZC4"/>
<dbReference type="EnsemblBacteria" id="CAR43658">
    <property type="protein sequence ID" value="CAR43658"/>
    <property type="gene ID" value="PMI1756"/>
</dbReference>
<dbReference type="GeneID" id="6803614"/>
<dbReference type="KEGG" id="pmr:PMI1756"/>
<dbReference type="eggNOG" id="COG1005">
    <property type="taxonomic scope" value="Bacteria"/>
</dbReference>
<dbReference type="HOGENOM" id="CLU_015134_0_1_6"/>
<dbReference type="Proteomes" id="UP000008319">
    <property type="component" value="Chromosome"/>
</dbReference>
<dbReference type="GO" id="GO:0005886">
    <property type="term" value="C:plasma membrane"/>
    <property type="evidence" value="ECO:0007669"/>
    <property type="project" value="UniProtKB-SubCell"/>
</dbReference>
<dbReference type="GO" id="GO:0003954">
    <property type="term" value="F:NADH dehydrogenase activity"/>
    <property type="evidence" value="ECO:0007669"/>
    <property type="project" value="TreeGrafter"/>
</dbReference>
<dbReference type="GO" id="GO:0016655">
    <property type="term" value="F:oxidoreductase activity, acting on NAD(P)H, quinone or similar compound as acceptor"/>
    <property type="evidence" value="ECO:0007669"/>
    <property type="project" value="UniProtKB-UniRule"/>
</dbReference>
<dbReference type="GO" id="GO:0048038">
    <property type="term" value="F:quinone binding"/>
    <property type="evidence" value="ECO:0007669"/>
    <property type="project" value="UniProtKB-KW"/>
</dbReference>
<dbReference type="GO" id="GO:0009060">
    <property type="term" value="P:aerobic respiration"/>
    <property type="evidence" value="ECO:0007669"/>
    <property type="project" value="TreeGrafter"/>
</dbReference>
<dbReference type="HAMAP" id="MF_01350">
    <property type="entry name" value="NDH1_NuoH"/>
    <property type="match status" value="1"/>
</dbReference>
<dbReference type="InterPro" id="IPR001694">
    <property type="entry name" value="NADH_UbQ_OxRdtase_su1/FPO"/>
</dbReference>
<dbReference type="InterPro" id="IPR018086">
    <property type="entry name" value="NADH_UbQ_OxRdtase_su1_CS"/>
</dbReference>
<dbReference type="NCBIfam" id="NF004740">
    <property type="entry name" value="PRK06076.1-1"/>
    <property type="match status" value="1"/>
</dbReference>
<dbReference type="NCBIfam" id="NF004741">
    <property type="entry name" value="PRK06076.1-2"/>
    <property type="match status" value="1"/>
</dbReference>
<dbReference type="PANTHER" id="PTHR11432">
    <property type="entry name" value="NADH DEHYDROGENASE SUBUNIT 1"/>
    <property type="match status" value="1"/>
</dbReference>
<dbReference type="PANTHER" id="PTHR11432:SF3">
    <property type="entry name" value="NADH-UBIQUINONE OXIDOREDUCTASE CHAIN 1"/>
    <property type="match status" value="1"/>
</dbReference>
<dbReference type="Pfam" id="PF00146">
    <property type="entry name" value="NADHdh"/>
    <property type="match status" value="1"/>
</dbReference>
<dbReference type="PROSITE" id="PS00667">
    <property type="entry name" value="COMPLEX1_ND1_1"/>
    <property type="match status" value="1"/>
</dbReference>
<dbReference type="PROSITE" id="PS00668">
    <property type="entry name" value="COMPLEX1_ND1_2"/>
    <property type="match status" value="1"/>
</dbReference>
<reference key="1">
    <citation type="journal article" date="2008" name="J. Bacteriol.">
        <title>Complete genome sequence of uropathogenic Proteus mirabilis, a master of both adherence and motility.</title>
        <authorList>
            <person name="Pearson M.M."/>
            <person name="Sebaihia M."/>
            <person name="Churcher C."/>
            <person name="Quail M.A."/>
            <person name="Seshasayee A.S."/>
            <person name="Luscombe N.M."/>
            <person name="Abdellah Z."/>
            <person name="Arrosmith C."/>
            <person name="Atkin B."/>
            <person name="Chillingworth T."/>
            <person name="Hauser H."/>
            <person name="Jagels K."/>
            <person name="Moule S."/>
            <person name="Mungall K."/>
            <person name="Norbertczak H."/>
            <person name="Rabbinowitsch E."/>
            <person name="Walker D."/>
            <person name="Whithead S."/>
            <person name="Thomson N.R."/>
            <person name="Rather P.N."/>
            <person name="Parkhill J."/>
            <person name="Mobley H.L.T."/>
        </authorList>
    </citation>
    <scope>NUCLEOTIDE SEQUENCE [LARGE SCALE GENOMIC DNA]</scope>
    <source>
        <strain>HI4320</strain>
    </source>
</reference>
<protein>
    <recommendedName>
        <fullName evidence="1">NADH-quinone oxidoreductase subunit H</fullName>
        <ecNumber evidence="1">7.1.1.-</ecNumber>
    </recommendedName>
    <alternativeName>
        <fullName evidence="1">NADH dehydrogenase I subunit H</fullName>
    </alternativeName>
    <alternativeName>
        <fullName evidence="1">NDH-1 subunit H</fullName>
    </alternativeName>
</protein>
<comment type="function">
    <text evidence="1">NDH-1 shuttles electrons from NADH, via FMN and iron-sulfur (Fe-S) centers, to quinones in the respiratory chain. The immediate electron acceptor for the enzyme in this species is believed to be ubiquinone. Couples the redox reaction to proton translocation (for every two electrons transferred, four hydrogen ions are translocated across the cytoplasmic membrane), and thus conserves the redox energy in a proton gradient. This subunit may bind ubiquinone.</text>
</comment>
<comment type="catalytic activity">
    <reaction evidence="1">
        <text>a quinone + NADH + 5 H(+)(in) = a quinol + NAD(+) + 4 H(+)(out)</text>
        <dbReference type="Rhea" id="RHEA:57888"/>
        <dbReference type="ChEBI" id="CHEBI:15378"/>
        <dbReference type="ChEBI" id="CHEBI:24646"/>
        <dbReference type="ChEBI" id="CHEBI:57540"/>
        <dbReference type="ChEBI" id="CHEBI:57945"/>
        <dbReference type="ChEBI" id="CHEBI:132124"/>
    </reaction>
</comment>
<comment type="subunit">
    <text evidence="1">NDH-1 is composed of 13 different subunits. Subunits NuoA, H, J, K, L, M, N constitute the membrane sector of the complex.</text>
</comment>
<comment type="subcellular location">
    <subcellularLocation>
        <location evidence="1">Cell inner membrane</location>
        <topology evidence="1">Multi-pass membrane protein</topology>
    </subcellularLocation>
</comment>
<comment type="similarity">
    <text evidence="1">Belongs to the complex I subunit 1 family.</text>
</comment>
<gene>
    <name evidence="1" type="primary">nuoH</name>
    <name type="ordered locus">PMI1756</name>
</gene>
<sequence length="325" mass="35993">MSWLSPEVTEILLTVLKAVVILLVVVTCGAFMSMGERRLLGLFQNRYGPNRVGYAGSAQLIADMIKMFFKEDWIPKFADRFIFTIAPVIAFSSLLLSFAIVPVSSTWVVADLNIGILFFLMVAGLAVYAVLFAGWSSNNKYSLLGAMRASAQTVSYEVFLGLSILGVVAQAGSFNLTDIVNSQAHMWNIIPQFFGFITFAIAGVAVCHRHPFDQPEAEQELADGYHIEYSGMKFGLFFVGEYIGIVAVSGLIVTLFFGGWQGPFLPSFVWFALKTGFFMMMFILIRASLPRPRYDQVMAFGWKICLPLTLINLLVTAAVILYNAQ</sequence>